<feature type="chain" id="PRO_0000108762" description="UDP-N-acetylglucosamine--dolichyl-phosphate N-acetylglucosaminephosphotransferase">
    <location>
        <begin position="1"/>
        <end position="410"/>
    </location>
</feature>
<feature type="topological domain" description="Lumenal" evidence="6">
    <location>
        <begin position="1"/>
        <end position="10"/>
    </location>
</feature>
<feature type="transmembrane region" description="Helical; Name=Helix 1" evidence="2">
    <location>
        <begin position="11"/>
        <end position="40"/>
    </location>
</feature>
<feature type="topological domain" description="Cytoplasmic" evidence="6">
    <location>
        <begin position="41"/>
        <end position="60"/>
    </location>
</feature>
<feature type="transmembrane region" description="Helical; Name=Helix 2" evidence="2">
    <location>
        <begin position="61"/>
        <end position="80"/>
    </location>
</feature>
<feature type="topological domain" description="Lumenal" evidence="6">
    <location>
        <begin position="81"/>
        <end position="93"/>
    </location>
</feature>
<feature type="transmembrane region" description="Helical; Name=Helix 3" evidence="2">
    <location>
        <begin position="94"/>
        <end position="120"/>
    </location>
</feature>
<feature type="topological domain" description="Cytoplasmic" evidence="6">
    <location>
        <begin position="121"/>
        <end position="123"/>
    </location>
</feature>
<feature type="transmembrane region" description="Helical; Name=Helix 4" evidence="2">
    <location>
        <begin position="124"/>
        <end position="145"/>
    </location>
</feature>
<feature type="topological domain" description="Lumenal" evidence="6">
    <location>
        <begin position="146"/>
        <end position="168"/>
    </location>
</feature>
<feature type="transmembrane region" description="Helical; Name=Helix 5" evidence="2">
    <location>
        <begin position="169"/>
        <end position="188"/>
    </location>
</feature>
<feature type="topological domain" description="Cytoplasmic" evidence="6">
    <location>
        <begin position="189"/>
        <end position="194"/>
    </location>
</feature>
<feature type="transmembrane region" description="Helical; Name=Helix 6" evidence="2">
    <location>
        <begin position="195"/>
        <end position="215"/>
    </location>
</feature>
<feature type="topological domain" description="Lumenal" evidence="6">
    <location>
        <begin position="216"/>
        <end position="220"/>
    </location>
</feature>
<feature type="transmembrane region" description="Helical; Name=Helix 7" evidence="2">
    <location>
        <begin position="221"/>
        <end position="244"/>
    </location>
</feature>
<feature type="topological domain" description="Cytoplasmic" evidence="6">
    <location>
        <begin position="245"/>
        <end position="252"/>
    </location>
</feature>
<feature type="transmembrane region" description="Helical; Name=Helix 8" evidence="2">
    <location>
        <begin position="253"/>
        <end position="271"/>
    </location>
</feature>
<feature type="topological domain" description="Lumenal" evidence="6">
    <location>
        <begin position="272"/>
        <end position="273"/>
    </location>
</feature>
<feature type="transmembrane region" description="Helical; Name=Helix 9" evidence="2">
    <location>
        <begin position="274"/>
        <end position="295"/>
    </location>
</feature>
<feature type="topological domain" description="Cytoplasmic" evidence="6">
    <location>
        <begin position="296"/>
        <end position="377"/>
    </location>
</feature>
<feature type="transmembrane region" description="Helical; Name=Helix 10" evidence="2">
    <location>
        <begin position="378"/>
        <end position="402"/>
    </location>
</feature>
<feature type="topological domain" description="Lumenal" evidence="6">
    <location>
        <begin position="403"/>
        <end position="410"/>
    </location>
</feature>
<feature type="binding site" evidence="2">
    <location>
        <begin position="46"/>
        <end position="48"/>
    </location>
    <ligand>
        <name>UDP-N-acetyl-alpha-D-glucosamine</name>
        <dbReference type="ChEBI" id="CHEBI:57705"/>
    </ligand>
</feature>
<feature type="binding site" evidence="2">
    <location>
        <position position="58"/>
    </location>
    <ligand>
        <name>UDP-N-acetyl-alpha-D-glucosamine</name>
        <dbReference type="ChEBI" id="CHEBI:57705"/>
    </ligand>
</feature>
<feature type="binding site" evidence="2">
    <location>
        <position position="127"/>
    </location>
    <ligand>
        <name>dolichyl phosphate</name>
        <dbReference type="ChEBI" id="CHEBI:57683"/>
    </ligand>
</feature>
<feature type="binding site" evidence="2">
    <location>
        <begin position="180"/>
        <end position="188"/>
    </location>
    <ligand>
        <name>dolichyl phosphate</name>
        <dbReference type="ChEBI" id="CHEBI:57683"/>
    </ligand>
</feature>
<feature type="binding site" evidence="2">
    <location>
        <position position="187"/>
    </location>
    <ligand>
        <name>Mg(2+)</name>
        <dbReference type="ChEBI" id="CHEBI:18420"/>
    </ligand>
</feature>
<feature type="binding site" evidence="2">
    <location>
        <position position="193"/>
    </location>
    <ligand>
        <name>UDP-N-acetyl-alpha-D-glucosamine</name>
        <dbReference type="ChEBI" id="CHEBI:57705"/>
    </ligand>
</feature>
<feature type="binding site" evidence="2">
    <location>
        <position position="254"/>
    </location>
    <ligand>
        <name>Mg(2+)</name>
        <dbReference type="ChEBI" id="CHEBI:18420"/>
    </ligand>
</feature>
<feature type="binding site" evidence="2">
    <location>
        <begin position="303"/>
        <end position="305"/>
    </location>
    <ligand>
        <name>UDP-N-acetyl-alpha-D-glucosamine</name>
        <dbReference type="ChEBI" id="CHEBI:57705"/>
    </ligand>
</feature>
<feature type="glycosylation site" description="N-linked (GlcNAc...) asparagine" evidence="3">
    <location>
        <position position="148"/>
    </location>
</feature>
<feature type="sequence variant" description="In RNA edited version.">
    <original>C</original>
    <variation>Y</variation>
    <location>
        <position position="74"/>
    </location>
</feature>
<accession>P42867</accession>
<accession>Q921W5</accession>
<protein>
    <recommendedName>
        <fullName>UDP-N-acetylglucosamine--dolichyl-phosphate N-acetylglucosaminephosphotransferase</fullName>
        <ecNumber evidence="2">2.7.8.15</ecNumber>
    </recommendedName>
    <alternativeName>
        <fullName>GlcNAc-1-P transferase</fullName>
        <shortName>G1PT</shortName>
        <shortName>GPT</shortName>
    </alternativeName>
    <alternativeName>
        <fullName>N-acetylglucosamine-1-phosphate transferase</fullName>
    </alternativeName>
</protein>
<comment type="function">
    <text evidence="2">UDP-N-acetylglucosamine--dolichyl-phosphate N-acetylglucosaminephosphotransferase that operates in the biosynthetic pathway of dolichol-linked oligosaccharides, the glycan precursors employed in protein asparagine (N)-glycosylation. The assembly of dolichol-linked oligosaccharides begins on the cytosolic side of the endoplasmic reticulum membrane and finishes in its lumen. The sequential addition of sugars to dolichol pyrophosphate produces dolichol-linked oligosaccharides containing fourteen sugars, including two GlcNAcs, nine mannoses and three glucoses. Once assembled, the oligosaccharide is transferred from the lipid to nascent proteins by oligosaccharyltransferases. Catalyzes the initial step of dolichol-linked oligosaccharide biosynthesis, transfering GlcNAc-1-P from cytosolic UDP-GlcNAc onto the carrier lipid dolichyl phosphate (P-dolichol), yielding GlcNAc-P-P-dolichol embedded in the cytoplasmic leaflet of the endoplasmic reticulum membrane.</text>
</comment>
<comment type="catalytic activity">
    <reaction evidence="2">
        <text>a di-trans,poly-cis-dolichyl phosphate + UDP-N-acetyl-alpha-D-glucosamine = an N-acetyl-alpha-D-glucosaminyl-diphospho-di-trans,poly-cis-dolichol + UMP</text>
        <dbReference type="Rhea" id="RHEA:13289"/>
        <dbReference type="Rhea" id="RHEA-COMP:19498"/>
        <dbReference type="Rhea" id="RHEA-COMP:19507"/>
        <dbReference type="ChEBI" id="CHEBI:57683"/>
        <dbReference type="ChEBI" id="CHEBI:57705"/>
        <dbReference type="ChEBI" id="CHEBI:57865"/>
        <dbReference type="ChEBI" id="CHEBI:58427"/>
        <dbReference type="EC" id="2.7.8.15"/>
    </reaction>
    <physiologicalReaction direction="left-to-right" evidence="2">
        <dbReference type="Rhea" id="RHEA:13290"/>
    </physiologicalReaction>
</comment>
<comment type="cofactor">
    <cofactor evidence="2">
        <name>Mg(2+)</name>
        <dbReference type="ChEBI" id="CHEBI:18420"/>
    </cofactor>
</comment>
<comment type="activity regulation">
    <text evidence="1">Inhibited by natural nucleoside antibiotic tunicamycin, which acts as a structural analog and competitor of UDP-GlcNAc.</text>
</comment>
<comment type="pathway">
    <text evidence="2">Protein modification; protein glycosylation.</text>
</comment>
<comment type="subunit">
    <text evidence="2">Homodimer.</text>
</comment>
<comment type="subcellular location">
    <subcellularLocation>
        <location evidence="1">Endoplasmic reticulum membrane</location>
        <topology evidence="2">Multi-pass membrane protein</topology>
    </subcellularLocation>
</comment>
<comment type="developmental stage">
    <text>Highest activity is during the mid-phase of lactation.</text>
</comment>
<comment type="RNA editing">
    <location>
        <position position="74" evidence="5"/>
    </location>
    <text>Partially edited.</text>
</comment>
<comment type="disruption phenotype">
    <text evidence="4">Mice die 4 to 5 days post-fertilization, just after implantation, suggesting that protein function and N-glycosylation are essential in early embryogenesis.</text>
</comment>
<comment type="similarity">
    <text evidence="6">Belongs to the glycosyltransferase 4 family.</text>
</comment>
<reference key="1">
    <citation type="journal article" date="1992" name="Biochem. J.">
        <title>Mouse UDP-GlcNAc: dolichyl-phosphate N-acetylglucosaminephosphotransferase. Molecular cloning of the cDNA, generation of anti-peptide antibodies and chromosomal localization.</title>
        <authorList>
            <person name="Rajput B."/>
            <person name="Ma J."/>
            <person name="Muniappa N."/>
            <person name="Schantz L."/>
            <person name="Naylor S.L."/>
            <person name="Lalley P.A."/>
            <person name="Vijay I.K."/>
        </authorList>
    </citation>
    <scope>NUCLEOTIDE SEQUENCE [MRNA]</scope>
    <source>
        <tissue>Mammary gland</tissue>
    </source>
</reference>
<reference key="2">
    <citation type="journal article" date="1994" name="J. Biol. Chem.">
        <title>Structure and organization of mouse GlcNAc-1-phosphate transferase gene.</title>
        <authorList>
            <person name="Rajput B."/>
            <person name="Ma J."/>
            <person name="Vijay I.K."/>
        </authorList>
    </citation>
    <scope>NUCLEOTIDE SEQUENCE [MRNA]</scope>
    <scope>RNA EDITING</scope>
    <source>
        <strain>BALB/cJ</strain>
        <strain>NIH Swiss</strain>
        <tissue>Liver</tissue>
        <tissue>Mammary gland</tissue>
    </source>
</reference>
<reference key="3">
    <citation type="journal article" date="2004" name="Genome Res.">
        <title>The status, quality, and expansion of the NIH full-length cDNA project: the Mammalian Gene Collection (MGC).</title>
        <authorList>
            <consortium name="The MGC Project Team"/>
        </authorList>
    </citation>
    <scope>NUCLEOTIDE SEQUENCE [LARGE SCALE MRNA]</scope>
    <source>
        <tissue>Mammary tumor</tissue>
    </source>
</reference>
<reference key="4">
    <citation type="journal article" date="1999" name="Glycobiology">
        <title>A recessive deletion in the GlcNAc-1-phosphotransferase gene results in peri-implantation embryonic lethality.</title>
        <authorList>
            <person name="Marek K.W."/>
            <person name="Vijay I.K."/>
            <person name="Marth J.D."/>
        </authorList>
    </citation>
    <scope>DISRUPTION PHENOTYPE</scope>
</reference>
<reference key="5">
    <citation type="journal article" date="2010" name="Cell">
        <title>A tissue-specific atlas of mouse protein phosphorylation and expression.</title>
        <authorList>
            <person name="Huttlin E.L."/>
            <person name="Jedrychowski M.P."/>
            <person name="Elias J.E."/>
            <person name="Goswami T."/>
            <person name="Rad R."/>
            <person name="Beausoleil S.A."/>
            <person name="Villen J."/>
            <person name="Haas W."/>
            <person name="Sowa M.E."/>
            <person name="Gygi S.P."/>
        </authorList>
    </citation>
    <scope>IDENTIFICATION BY MASS SPECTROMETRY [LARGE SCALE ANALYSIS]</scope>
    <source>
        <tissue>Liver</tissue>
    </source>
</reference>
<keyword id="KW-0002">3D-structure</keyword>
<keyword id="KW-0256">Endoplasmic reticulum</keyword>
<keyword id="KW-0325">Glycoprotein</keyword>
<keyword id="KW-0328">Glycosyltransferase</keyword>
<keyword id="KW-0460">Magnesium</keyword>
<keyword id="KW-0472">Membrane</keyword>
<keyword id="KW-0479">Metal-binding</keyword>
<keyword id="KW-1185">Reference proteome</keyword>
<keyword id="KW-0691">RNA editing</keyword>
<keyword id="KW-0808">Transferase</keyword>
<keyword id="KW-0812">Transmembrane</keyword>
<keyword id="KW-1133">Transmembrane helix</keyword>
<dbReference type="EC" id="2.7.8.15" evidence="2"/>
<dbReference type="EMBL" id="X65603">
    <property type="protein sequence ID" value="CAA46553.1"/>
    <property type="molecule type" value="mRNA"/>
</dbReference>
<dbReference type="EMBL" id="BC010474">
    <property type="protein sequence ID" value="AAH10474.1"/>
    <property type="molecule type" value="mRNA"/>
</dbReference>
<dbReference type="CCDS" id="CCDS23104.1"/>
<dbReference type="PIR" id="S24326">
    <property type="entry name" value="S24326"/>
</dbReference>
<dbReference type="RefSeq" id="NP_031901.2">
    <property type="nucleotide sequence ID" value="NM_007875.2"/>
</dbReference>
<dbReference type="PDB" id="6JQ2">
    <property type="method" value="X-ray"/>
    <property type="resolution" value="2.40 A"/>
    <property type="chains" value="P=206-213"/>
</dbReference>
<dbReference type="PDBsum" id="6JQ2"/>
<dbReference type="SMR" id="P42867"/>
<dbReference type="BioGRID" id="199296">
    <property type="interactions" value="1"/>
</dbReference>
<dbReference type="FunCoup" id="P42867">
    <property type="interactions" value="2501"/>
</dbReference>
<dbReference type="IntAct" id="P42867">
    <property type="interactions" value="1"/>
</dbReference>
<dbReference type="STRING" id="10090.ENSMUSP00000056282"/>
<dbReference type="GlyCosmos" id="P42867">
    <property type="glycosylation" value="1 site, No reported glycans"/>
</dbReference>
<dbReference type="GlyGen" id="P42867">
    <property type="glycosylation" value="1 site"/>
</dbReference>
<dbReference type="iPTMnet" id="P42867"/>
<dbReference type="PhosphoSitePlus" id="P42867"/>
<dbReference type="jPOST" id="P42867"/>
<dbReference type="PaxDb" id="10090-ENSMUSP00000056282"/>
<dbReference type="PeptideAtlas" id="P42867"/>
<dbReference type="ProteomicsDB" id="269626"/>
<dbReference type="Antibodypedia" id="32608">
    <property type="antibodies" value="152 antibodies from 24 providers"/>
</dbReference>
<dbReference type="DNASU" id="13478"/>
<dbReference type="Ensembl" id="ENSMUST00000054708.5">
    <property type="protein sequence ID" value="ENSMUSP00000056282.4"/>
    <property type="gene ID" value="ENSMUSG00000032123.6"/>
</dbReference>
<dbReference type="GeneID" id="13478"/>
<dbReference type="KEGG" id="mmu:13478"/>
<dbReference type="UCSC" id="uc009pcv.1">
    <property type="organism name" value="mouse"/>
</dbReference>
<dbReference type="AGR" id="MGI:1196396"/>
<dbReference type="CTD" id="1798"/>
<dbReference type="MGI" id="MGI:1196396">
    <property type="gene designation" value="Dpagt1"/>
</dbReference>
<dbReference type="VEuPathDB" id="HostDB:ENSMUSG00000032123"/>
<dbReference type="eggNOG" id="KOG2788">
    <property type="taxonomic scope" value="Eukaryota"/>
</dbReference>
<dbReference type="GeneTree" id="ENSGT00390000011424"/>
<dbReference type="HOGENOM" id="CLU_029942_0_1_1"/>
<dbReference type="InParanoid" id="P42867"/>
<dbReference type="OMA" id="LPHFNAR"/>
<dbReference type="OrthoDB" id="10262326at2759"/>
<dbReference type="PhylomeDB" id="P42867"/>
<dbReference type="TreeFam" id="TF313734"/>
<dbReference type="Reactome" id="R-MMU-446193">
    <property type="pathway name" value="Biosynthesis of the N-glycan precursor (dolichol lipid-linked oligosaccharide, LLO) and transfer to a nascent protein"/>
</dbReference>
<dbReference type="UniPathway" id="UPA00378"/>
<dbReference type="BioGRID-ORCS" id="13478">
    <property type="hits" value="30 hits in 82 CRISPR screens"/>
</dbReference>
<dbReference type="ChiTaRS" id="Dpagt1">
    <property type="organism name" value="mouse"/>
</dbReference>
<dbReference type="PRO" id="PR:P42867"/>
<dbReference type="Proteomes" id="UP000000589">
    <property type="component" value="Chromosome 9"/>
</dbReference>
<dbReference type="RNAct" id="P42867">
    <property type="molecule type" value="protein"/>
</dbReference>
<dbReference type="Bgee" id="ENSMUSG00000032123">
    <property type="expression patterns" value="Expressed in yolk sac and 219 other cell types or tissues"/>
</dbReference>
<dbReference type="ExpressionAtlas" id="P42867">
    <property type="expression patterns" value="baseline and differential"/>
</dbReference>
<dbReference type="GO" id="GO:0005789">
    <property type="term" value="C:endoplasmic reticulum membrane"/>
    <property type="evidence" value="ECO:0000304"/>
    <property type="project" value="MGI"/>
</dbReference>
<dbReference type="GO" id="GO:0005794">
    <property type="term" value="C:Golgi apparatus"/>
    <property type="evidence" value="ECO:0000353"/>
    <property type="project" value="MGI"/>
</dbReference>
<dbReference type="GO" id="GO:0016757">
    <property type="term" value="F:glycosyltransferase activity"/>
    <property type="evidence" value="ECO:0007669"/>
    <property type="project" value="UniProtKB-KW"/>
</dbReference>
<dbReference type="GO" id="GO:0046872">
    <property type="term" value="F:metal ion binding"/>
    <property type="evidence" value="ECO:0007669"/>
    <property type="project" value="UniProtKB-KW"/>
</dbReference>
<dbReference type="GO" id="GO:0003975">
    <property type="term" value="F:UDP-N-acetylglucosamine-dolichyl-phosphate N-acetylglucosaminephosphotransferase activity"/>
    <property type="evidence" value="ECO:0000314"/>
    <property type="project" value="MGI"/>
</dbReference>
<dbReference type="GO" id="GO:0003976">
    <property type="term" value="F:UDP-N-acetylglucosamine-lysosomal-enzyme N-acetylglucosaminephosphotransferase activity"/>
    <property type="evidence" value="ECO:0000250"/>
    <property type="project" value="MGI"/>
</dbReference>
<dbReference type="GO" id="GO:0006488">
    <property type="term" value="P:dolichol-linked oligosaccharide biosynthetic process"/>
    <property type="evidence" value="ECO:0000250"/>
    <property type="project" value="UniProtKB"/>
</dbReference>
<dbReference type="CDD" id="cd06855">
    <property type="entry name" value="GT_GPT_euk"/>
    <property type="match status" value="1"/>
</dbReference>
<dbReference type="InterPro" id="IPR048439">
    <property type="entry name" value="DPAGT1_ins"/>
</dbReference>
<dbReference type="InterPro" id="IPR000715">
    <property type="entry name" value="Glycosyl_transferase_4"/>
</dbReference>
<dbReference type="InterPro" id="IPR033895">
    <property type="entry name" value="GPT"/>
</dbReference>
<dbReference type="PANTHER" id="PTHR10571">
    <property type="entry name" value="UDP-N-ACETYLGLUCOSAMINE--DOLICHYL-PHOSPHATE N-ACETYLGLUCOSAMINEPHOSPHOTRANSFERASE"/>
    <property type="match status" value="1"/>
</dbReference>
<dbReference type="PANTHER" id="PTHR10571:SF0">
    <property type="entry name" value="UDP-N-ACETYLGLUCOSAMINE--DOLICHYL-PHOSPHATE N-ACETYLGLUCOSAMINEPHOSPHOTRANSFERASE"/>
    <property type="match status" value="1"/>
</dbReference>
<dbReference type="Pfam" id="PF21383">
    <property type="entry name" value="DPAGT1_ins"/>
    <property type="match status" value="1"/>
</dbReference>
<dbReference type="Pfam" id="PF00953">
    <property type="entry name" value="Glycos_transf_4"/>
    <property type="match status" value="1"/>
</dbReference>
<evidence type="ECO:0000250" key="1">
    <source>
        <dbReference type="UniProtKB" id="P23338"/>
    </source>
</evidence>
<evidence type="ECO:0000250" key="2">
    <source>
        <dbReference type="UniProtKB" id="Q9H3H5"/>
    </source>
</evidence>
<evidence type="ECO:0000255" key="3"/>
<evidence type="ECO:0000269" key="4">
    <source>
    </source>
</evidence>
<evidence type="ECO:0000269" key="5">
    <source>
    </source>
</evidence>
<evidence type="ECO:0000305" key="6"/>
<evidence type="ECO:0000312" key="7">
    <source>
        <dbReference type="MGI" id="MGI:1196396"/>
    </source>
</evidence>
<sequence>MWAFPELPLPLPLLVNLIGSLLGFVATVTLIPAFRSHFIAARLCGQDLNKLSQQQIPESQGVISGAVFLIILFCFIPFPFLNCFVEEQCKAFPHHEFVALIGALLAICCMIFLGFADDVLNLRWRHKLLLPTAASLPLLMVYFTNFGNTTIVVPKPFRWILGLHLDLGILYYVYMGLLAVFCTNAINILAGINGLEAGQSLVISASIIVFNLVELEGDYRDDHIFSLYFMIPFFFTTLGLLYHNWYPSRVFVGDTFCYFAGMTFAVVGILGHFSKTMLLFFMPQVFNFLYSLPQLFHIIPCPRHRMPRLNAKTGKLEMSYSKFKTKNLSFLGTFILKVAENLRLVTVHQGESEDGAFTECNNMTLINLLLKVFGPIHERNLTLLLLLLQVLSSAATFSIRYQLVRLFYDV</sequence>
<proteinExistence type="evidence at protein level"/>
<organism>
    <name type="scientific">Mus musculus</name>
    <name type="common">Mouse</name>
    <dbReference type="NCBI Taxonomy" id="10090"/>
    <lineage>
        <taxon>Eukaryota</taxon>
        <taxon>Metazoa</taxon>
        <taxon>Chordata</taxon>
        <taxon>Craniata</taxon>
        <taxon>Vertebrata</taxon>
        <taxon>Euteleostomi</taxon>
        <taxon>Mammalia</taxon>
        <taxon>Eutheria</taxon>
        <taxon>Euarchontoglires</taxon>
        <taxon>Glires</taxon>
        <taxon>Rodentia</taxon>
        <taxon>Myomorpha</taxon>
        <taxon>Muroidea</taxon>
        <taxon>Muridae</taxon>
        <taxon>Murinae</taxon>
        <taxon>Mus</taxon>
        <taxon>Mus</taxon>
    </lineage>
</organism>
<gene>
    <name evidence="7" type="primary">Dpagt1</name>
    <name type="synonym">Dpagt2</name>
    <name type="synonym">Gnpta</name>
</gene>
<name>GPT_MOUSE</name>